<evidence type="ECO:0000250" key="1">
    <source>
        <dbReference type="UniProtKB" id="P0A7D1"/>
    </source>
</evidence>
<evidence type="ECO:0000255" key="2"/>
<evidence type="ECO:0000269" key="3">
    <source>
    </source>
</evidence>
<evidence type="ECO:0000269" key="4">
    <source>
    </source>
</evidence>
<evidence type="ECO:0000269" key="5">
    <source>
    </source>
</evidence>
<evidence type="ECO:0000269" key="6">
    <source>
    </source>
</evidence>
<evidence type="ECO:0000269" key="7">
    <source>
    </source>
</evidence>
<evidence type="ECO:0000269" key="8">
    <source>
    </source>
</evidence>
<evidence type="ECO:0000305" key="9"/>
<evidence type="ECO:0007829" key="10">
    <source>
        <dbReference type="PDB" id="1RYB"/>
    </source>
</evidence>
<evidence type="ECO:0007829" key="11">
    <source>
        <dbReference type="PDB" id="1RYM"/>
    </source>
</evidence>
<evidence type="ECO:0007829" key="12">
    <source>
        <dbReference type="PDB" id="1RYN"/>
    </source>
</evidence>
<name>CRS2_MAIZE</name>
<protein>
    <recommendedName>
        <fullName>Chloroplastic group IIB intron splicing facilitator CRS2, chloroplastic</fullName>
    </recommendedName>
    <alternativeName>
        <fullName>Chloroplastic RNA splicing factor 2</fullName>
    </alternativeName>
    <alternativeName>
        <fullName>Protein CHLOROPLAST RNA SPLICING 2</fullName>
    </alternativeName>
</protein>
<reference key="1">
    <citation type="journal article" date="2001" name="EMBO J.">
        <title>Recruitment of a peptidyl-tRNA hydrolase as a facilitator of group II intron splicing in chloroplasts.</title>
        <authorList>
            <person name="Jenkins B.D."/>
            <person name="Barkan A."/>
        </authorList>
    </citation>
    <scope>NUCLEOTIDE SEQUENCE [MRNA]</scope>
    <scope>FUNCTION</scope>
    <scope>INTERACTION WITH RNA</scope>
    <scope>SUBCELLULAR LOCATION</scope>
</reference>
<reference key="2">
    <citation type="journal article" date="1997" name="Plant Cell">
        <title>Nuclear mutations that block group II RNA splicing in maize chloroplasts reveal several intron classes with distinct requirements for splicing factors.</title>
        <authorList>
            <person name="Jenkins B.D."/>
            <person name="Kulhanek D.J."/>
            <person name="Barkan A."/>
        </authorList>
    </citation>
    <scope>FUNCTION</scope>
</reference>
<reference key="3">
    <citation type="journal article" date="1999" name="Nucleic Acids Res.">
        <title>Comparative analysis of splicing of the complete set of chloroplast group II introns in three higher plant mutants.</title>
        <authorList>
            <person name="Vogel J."/>
            <person name="Boerner T."/>
            <person name="Hess W.R."/>
        </authorList>
    </citation>
    <scope>FUNCTION</scope>
</reference>
<reference key="4">
    <citation type="journal article" date="2003" name="EMBO J.">
        <title>Group II intron splicing factors derived by diversification of an ancient RNA-binding domain.</title>
        <authorList>
            <person name="Ostheimer G.J."/>
            <person name="Williams-Carrier R."/>
            <person name="Belcher S."/>
            <person name="Osborne E."/>
            <person name="Gierke J."/>
            <person name="Barkan A."/>
        </authorList>
    </citation>
    <scope>FUNCTION</scope>
    <scope>INTERACTION WITH CAF1 AND CAF2</scope>
</reference>
<reference key="5">
    <citation type="journal article" date="2006" name="J. Biol. Chem.">
        <title>Formation of the CRS2-CAF2 group II intron splicing complex is mediated by a 22-amino acid motif in the COOH-terminal region of CAF2.</title>
        <authorList>
            <person name="Ostheimer G.J."/>
            <person name="Rojas M."/>
            <person name="Hadjivassiliou H."/>
            <person name="Barkan A."/>
        </authorList>
    </citation>
    <scope>INTERACTION WITH CAF1 AND CAF2</scope>
</reference>
<reference key="6">
    <citation type="journal article" date="2005" name="J. Mol. Biol.">
        <title>Structural analysis of the group II intron splicing factor CRS2 yields insights into its protein and RNA interaction surfaces.</title>
        <authorList>
            <person name="Ostheimer G.J."/>
            <person name="Hadjivassiliou H."/>
            <person name="Kloer D.P."/>
            <person name="Barkan A."/>
            <person name="Matthews B.W."/>
        </authorList>
    </citation>
    <scope>X-RAY CRYSTALLOGRAPHY (1.7 ANGSTROMS) OF 55-256</scope>
    <scope>INTERACTION WITH CAF1 AND CAF2</scope>
    <scope>MUTAGENESIS OF ILE-100; SER-102 AND ILE-108</scope>
</reference>
<proteinExistence type="evidence at protein level"/>
<gene>
    <name type="primary">CRS2</name>
</gene>
<comment type="function">
    <text evidence="3 4 5 8">Required for the splicing of group IIB introns in chloroplasts. Forms complexes with either CAF1 or CAF2 which, in turn, interact with RNA and confer intron specificity of the splicing particles. Has no peptidyl-tRNA hydrolase activity.</text>
</comment>
<comment type="subunit">
    <text evidence="4 5 6 7">Interacts with CAF1 and CAF2. Part of large ribonucleo-protein complexes that include group IIB introns and either CAF1 or CAF2.</text>
</comment>
<comment type="subcellular location">
    <subcellularLocation>
        <location evidence="4">Plastid</location>
        <location evidence="4">Chloroplast stroma</location>
    </subcellularLocation>
</comment>
<comment type="similarity">
    <text evidence="9">Belongs to the PTH family. CRS2 subfamily.</text>
</comment>
<feature type="transit peptide" description="Chloroplast" evidence="2">
    <location>
        <begin position="1"/>
        <end position="45"/>
    </location>
</feature>
<feature type="chain" id="PRO_0000280532" description="Chloroplastic group IIB intron splicing facilitator CRS2, chloroplastic">
    <location>
        <begin position="46"/>
        <end position="256"/>
    </location>
</feature>
<feature type="active site" description="Proton acceptor" evidence="1">
    <location>
        <position position="79"/>
    </location>
</feature>
<feature type="binding site" evidence="1">
    <location>
        <position position="74"/>
    </location>
    <ligand>
        <name>tRNA</name>
        <dbReference type="ChEBI" id="CHEBI:17843"/>
    </ligand>
</feature>
<feature type="binding site" evidence="1">
    <location>
        <position position="124"/>
    </location>
    <ligand>
        <name>tRNA</name>
        <dbReference type="ChEBI" id="CHEBI:17843"/>
    </ligand>
</feature>
<feature type="binding site" evidence="1">
    <location>
        <position position="126"/>
    </location>
    <ligand>
        <name>tRNA</name>
        <dbReference type="ChEBI" id="CHEBI:17843"/>
    </ligand>
</feature>
<feature type="binding site" evidence="1">
    <location>
        <position position="172"/>
    </location>
    <ligand>
        <name>tRNA</name>
        <dbReference type="ChEBI" id="CHEBI:17843"/>
    </ligand>
</feature>
<feature type="site" description="Stabilizes the basic form of H active site to accept a proton" evidence="1">
    <location>
        <position position="151"/>
    </location>
</feature>
<feature type="mutagenesis site" description="Reduced interaction with CAF1 and CAF2. Loss of interaction with CAF1 and CAF2; when associated with F-102. Loss of interaction with CAF1 and CAF2; when associated with T-108." evidence="6">
    <original>I</original>
    <variation>N</variation>
    <location>
        <position position="100"/>
    </location>
</feature>
<feature type="mutagenesis site" description="Loss of interaction with CAF1 and CAF2; when associated with N-100." evidence="6">
    <original>S</original>
    <variation>F</variation>
    <location>
        <position position="102"/>
    </location>
</feature>
<feature type="mutagenesis site" description="Loss of interaction with CAF1 and CAF2; when associated with N-100." evidence="6">
    <original>I</original>
    <variation>T</variation>
    <location>
        <position position="108"/>
    </location>
</feature>
<feature type="strand" evidence="10">
    <location>
        <begin position="62"/>
        <end position="66"/>
    </location>
</feature>
<feature type="helix" evidence="10">
    <location>
        <begin position="72"/>
        <end position="74"/>
    </location>
</feature>
<feature type="helix" evidence="10">
    <location>
        <begin position="78"/>
        <end position="80"/>
    </location>
</feature>
<feature type="helix" evidence="10">
    <location>
        <begin position="81"/>
        <end position="92"/>
    </location>
</feature>
<feature type="strand" evidence="10">
    <location>
        <begin position="99"/>
        <end position="101"/>
    </location>
</feature>
<feature type="strand" evidence="10">
    <location>
        <begin position="104"/>
        <end position="111"/>
    </location>
</feature>
<feature type="strand" evidence="10">
    <location>
        <begin position="114"/>
        <end position="121"/>
    </location>
</feature>
<feature type="helix" evidence="10">
    <location>
        <begin position="125"/>
        <end position="127"/>
    </location>
</feature>
<feature type="helix" evidence="10">
    <location>
        <begin position="128"/>
        <end position="138"/>
    </location>
</feature>
<feature type="helix" evidence="10">
    <location>
        <begin position="143"/>
        <end position="145"/>
    </location>
</feature>
<feature type="strand" evidence="10">
    <location>
        <begin position="146"/>
        <end position="152"/>
    </location>
</feature>
<feature type="strand" evidence="10">
    <location>
        <begin position="160"/>
        <end position="165"/>
    </location>
</feature>
<feature type="helix" evidence="10">
    <location>
        <begin position="172"/>
        <end position="180"/>
    </location>
</feature>
<feature type="turn" evidence="10">
    <location>
        <begin position="181"/>
        <end position="183"/>
    </location>
</feature>
<feature type="helix" evidence="11">
    <location>
        <begin position="184"/>
        <end position="186"/>
    </location>
</feature>
<feature type="strand" evidence="10">
    <location>
        <begin position="189"/>
        <end position="193"/>
    </location>
</feature>
<feature type="strand" evidence="12">
    <location>
        <begin position="199"/>
        <end position="201"/>
    </location>
</feature>
<feature type="helix" evidence="10">
    <location>
        <begin position="203"/>
        <end position="207"/>
    </location>
</feature>
<feature type="helix" evidence="10">
    <location>
        <begin position="213"/>
        <end position="236"/>
    </location>
</feature>
<feature type="helix" evidence="12">
    <location>
        <begin position="242"/>
        <end position="250"/>
    </location>
</feature>
<dbReference type="EMBL" id="AF225708">
    <property type="protein sequence ID" value="AAF27939.1"/>
    <property type="molecule type" value="mRNA"/>
</dbReference>
<dbReference type="PDB" id="1RYB">
    <property type="method" value="X-ray"/>
    <property type="resolution" value="1.70 A"/>
    <property type="chains" value="A=57-249"/>
</dbReference>
<dbReference type="PDB" id="1RYM">
    <property type="method" value="X-ray"/>
    <property type="resolution" value="1.80 A"/>
    <property type="chains" value="A=57-249"/>
</dbReference>
<dbReference type="PDB" id="1RYN">
    <property type="method" value="X-ray"/>
    <property type="resolution" value="1.75 A"/>
    <property type="chains" value="A=58-250"/>
</dbReference>
<dbReference type="PDBsum" id="1RYB"/>
<dbReference type="PDBsum" id="1RYM"/>
<dbReference type="PDBsum" id="1RYN"/>
<dbReference type="SMR" id="Q9M5P4"/>
<dbReference type="BioGRID" id="951029">
    <property type="interactions" value="1"/>
</dbReference>
<dbReference type="FunCoup" id="Q9M5P4">
    <property type="interactions" value="364"/>
</dbReference>
<dbReference type="STRING" id="4577.Q9M5P4"/>
<dbReference type="PaxDb" id="4577-GRMZM2G132021_P03"/>
<dbReference type="MaizeGDB" id="106358"/>
<dbReference type="eggNOG" id="KOG2255">
    <property type="taxonomic scope" value="Eukaryota"/>
</dbReference>
<dbReference type="InParanoid" id="Q9M5P4"/>
<dbReference type="EvolutionaryTrace" id="Q9M5P4"/>
<dbReference type="Proteomes" id="UP000007305">
    <property type="component" value="Unplaced"/>
</dbReference>
<dbReference type="ExpressionAtlas" id="Q9M5P4">
    <property type="expression patterns" value="baseline and differential"/>
</dbReference>
<dbReference type="GO" id="GO:0009570">
    <property type="term" value="C:chloroplast stroma"/>
    <property type="evidence" value="ECO:0007669"/>
    <property type="project" value="UniProtKB-SubCell"/>
</dbReference>
<dbReference type="GO" id="GO:1990904">
    <property type="term" value="C:ribonucleoprotein complex"/>
    <property type="evidence" value="ECO:0007669"/>
    <property type="project" value="UniProtKB-KW"/>
</dbReference>
<dbReference type="GO" id="GO:0004045">
    <property type="term" value="F:peptidyl-tRNA hydrolase activity"/>
    <property type="evidence" value="ECO:0000318"/>
    <property type="project" value="GO_Central"/>
</dbReference>
<dbReference type="GO" id="GO:0000049">
    <property type="term" value="F:tRNA binding"/>
    <property type="evidence" value="ECO:0007669"/>
    <property type="project" value="UniProtKB-KW"/>
</dbReference>
<dbReference type="GO" id="GO:0006397">
    <property type="term" value="P:mRNA processing"/>
    <property type="evidence" value="ECO:0007669"/>
    <property type="project" value="UniProtKB-KW"/>
</dbReference>
<dbReference type="GO" id="GO:0008380">
    <property type="term" value="P:RNA splicing"/>
    <property type="evidence" value="ECO:0007669"/>
    <property type="project" value="UniProtKB-KW"/>
</dbReference>
<dbReference type="CDD" id="cd02406">
    <property type="entry name" value="CRS2"/>
    <property type="match status" value="1"/>
</dbReference>
<dbReference type="FunFam" id="3.40.50.1470:FF:000001">
    <property type="entry name" value="Peptidyl-tRNA hydrolase"/>
    <property type="match status" value="1"/>
</dbReference>
<dbReference type="Gene3D" id="3.40.50.1470">
    <property type="entry name" value="Peptidyl-tRNA hydrolase"/>
    <property type="match status" value="1"/>
</dbReference>
<dbReference type="HAMAP" id="MF_00083">
    <property type="entry name" value="Pept_tRNA_hydro_bact"/>
    <property type="match status" value="1"/>
</dbReference>
<dbReference type="InterPro" id="IPR048076">
    <property type="entry name" value="CRS2-like"/>
</dbReference>
<dbReference type="InterPro" id="IPR001328">
    <property type="entry name" value="Pept_tRNA_hydro"/>
</dbReference>
<dbReference type="InterPro" id="IPR018171">
    <property type="entry name" value="Pept_tRNA_hydro_CS"/>
</dbReference>
<dbReference type="InterPro" id="IPR036416">
    <property type="entry name" value="Pept_tRNA_hydro_sf"/>
</dbReference>
<dbReference type="NCBIfam" id="TIGR00447">
    <property type="entry name" value="pth"/>
    <property type="match status" value="1"/>
</dbReference>
<dbReference type="PANTHER" id="PTHR17224:SF3">
    <property type="entry name" value="CHLOROPLASTIC GROUP IIB INTRON SPLICING FACILITATOR CRS2-B, CHLOROPLASTIC"/>
    <property type="match status" value="1"/>
</dbReference>
<dbReference type="PANTHER" id="PTHR17224">
    <property type="entry name" value="PEPTIDYL-TRNA HYDROLASE"/>
    <property type="match status" value="1"/>
</dbReference>
<dbReference type="Pfam" id="PF01195">
    <property type="entry name" value="Pept_tRNA_hydro"/>
    <property type="match status" value="1"/>
</dbReference>
<dbReference type="SUPFAM" id="SSF53178">
    <property type="entry name" value="Peptidyl-tRNA hydrolase-like"/>
    <property type="match status" value="1"/>
</dbReference>
<dbReference type="PROSITE" id="PS01195">
    <property type="entry name" value="PEPT_TRNA_HYDROL_1"/>
    <property type="match status" value="1"/>
</dbReference>
<organism>
    <name type="scientific">Zea mays</name>
    <name type="common">Maize</name>
    <dbReference type="NCBI Taxonomy" id="4577"/>
    <lineage>
        <taxon>Eukaryota</taxon>
        <taxon>Viridiplantae</taxon>
        <taxon>Streptophyta</taxon>
        <taxon>Embryophyta</taxon>
        <taxon>Tracheophyta</taxon>
        <taxon>Spermatophyta</taxon>
        <taxon>Magnoliopsida</taxon>
        <taxon>Liliopsida</taxon>
        <taxon>Poales</taxon>
        <taxon>Poaceae</taxon>
        <taxon>PACMAD clade</taxon>
        <taxon>Panicoideae</taxon>
        <taxon>Andropogonodae</taxon>
        <taxon>Andropogoneae</taxon>
        <taxon>Tripsacinae</taxon>
        <taxon>Zea</taxon>
    </lineage>
</organism>
<sequence>MSLLAAAIPSTSSHFSAPFLPSFRMPRKSLTAPLHRIRRPRPFTVVSSVPDPAAGPVEYTPWLIAGLGNPGNKYYGTRHNVGFEMVDRIAAEEGITMNTIQSKSLLGIGSIGEVPVLVVKPQSYMNYSGEAIGPLAAYYQVPLRHILLIYDDTSLPNGVLRLQKKGGHGRHNGLQNVIEHLDGRREFPRLSIGIGSPPGKMDPRAFLLQKFSSEERVQIDTALEQGVDAVRTLVLKGFSGSTERFNLVQKYKFHRV</sequence>
<accession>Q9M5P4</accession>
<keyword id="KW-0002">3D-structure</keyword>
<keyword id="KW-0150">Chloroplast</keyword>
<keyword id="KW-0507">mRNA processing</keyword>
<keyword id="KW-0508">mRNA splicing</keyword>
<keyword id="KW-0934">Plastid</keyword>
<keyword id="KW-1185">Reference proteome</keyword>
<keyword id="KW-0687">Ribonucleoprotein</keyword>
<keyword id="KW-0694">RNA-binding</keyword>
<keyword id="KW-0809">Transit peptide</keyword>
<keyword id="KW-0820">tRNA-binding</keyword>